<gene>
    <name evidence="1" type="primary">pdxB</name>
    <name type="ordered locus">PMI1792</name>
</gene>
<feature type="chain" id="PRO_1000188271" description="Erythronate-4-phosphate dehydrogenase">
    <location>
        <begin position="1"/>
        <end position="375"/>
    </location>
</feature>
<feature type="active site" evidence="1">
    <location>
        <position position="208"/>
    </location>
</feature>
<feature type="active site" evidence="1">
    <location>
        <position position="237"/>
    </location>
</feature>
<feature type="active site" description="Proton donor" evidence="1">
    <location>
        <position position="254"/>
    </location>
</feature>
<feature type="binding site" evidence="1">
    <location>
        <position position="45"/>
    </location>
    <ligand>
        <name>substrate</name>
    </ligand>
</feature>
<feature type="binding site" evidence="1">
    <location>
        <position position="66"/>
    </location>
    <ligand>
        <name>substrate</name>
    </ligand>
</feature>
<feature type="binding site" evidence="1">
    <location>
        <position position="146"/>
    </location>
    <ligand>
        <name>NAD(+)</name>
        <dbReference type="ChEBI" id="CHEBI:57540"/>
    </ligand>
</feature>
<feature type="binding site" evidence="1">
    <location>
        <position position="175"/>
    </location>
    <ligand>
        <name>NAD(+)</name>
        <dbReference type="ChEBI" id="CHEBI:57540"/>
    </ligand>
</feature>
<feature type="binding site" evidence="1">
    <location>
        <begin position="206"/>
        <end position="208"/>
    </location>
    <ligand>
        <name>NAD(+)</name>
        <dbReference type="ChEBI" id="CHEBI:57540"/>
    </ligand>
</feature>
<feature type="binding site" evidence="1">
    <location>
        <position position="232"/>
    </location>
    <ligand>
        <name>NAD(+)</name>
        <dbReference type="ChEBI" id="CHEBI:57540"/>
    </ligand>
</feature>
<feature type="binding site" evidence="1">
    <location>
        <position position="257"/>
    </location>
    <ligand>
        <name>NAD(+)</name>
        <dbReference type="ChEBI" id="CHEBI:57540"/>
    </ligand>
</feature>
<feature type="binding site" evidence="1">
    <location>
        <position position="258"/>
    </location>
    <ligand>
        <name>substrate</name>
    </ligand>
</feature>
<evidence type="ECO:0000255" key="1">
    <source>
        <dbReference type="HAMAP-Rule" id="MF_01825"/>
    </source>
</evidence>
<dbReference type="EC" id="1.1.1.290" evidence="1"/>
<dbReference type="EMBL" id="AM942759">
    <property type="protein sequence ID" value="CAR43726.1"/>
    <property type="molecule type" value="Genomic_DNA"/>
</dbReference>
<dbReference type="RefSeq" id="WP_004243739.1">
    <property type="nucleotide sequence ID" value="NC_010554.1"/>
</dbReference>
<dbReference type="SMR" id="B4EZF9"/>
<dbReference type="EnsemblBacteria" id="CAR43726">
    <property type="protein sequence ID" value="CAR43726"/>
    <property type="gene ID" value="PMI1792"/>
</dbReference>
<dbReference type="GeneID" id="6800463"/>
<dbReference type="KEGG" id="pmr:PMI1792"/>
<dbReference type="eggNOG" id="COG0111">
    <property type="taxonomic scope" value="Bacteria"/>
</dbReference>
<dbReference type="HOGENOM" id="CLU_019796_4_0_6"/>
<dbReference type="UniPathway" id="UPA00244">
    <property type="reaction ID" value="UER00310"/>
</dbReference>
<dbReference type="Proteomes" id="UP000008319">
    <property type="component" value="Chromosome"/>
</dbReference>
<dbReference type="GO" id="GO:0005829">
    <property type="term" value="C:cytosol"/>
    <property type="evidence" value="ECO:0007669"/>
    <property type="project" value="TreeGrafter"/>
</dbReference>
<dbReference type="GO" id="GO:0033711">
    <property type="term" value="F:4-phosphoerythronate dehydrogenase activity"/>
    <property type="evidence" value="ECO:0007669"/>
    <property type="project" value="UniProtKB-EC"/>
</dbReference>
<dbReference type="GO" id="GO:0051287">
    <property type="term" value="F:NAD binding"/>
    <property type="evidence" value="ECO:0007669"/>
    <property type="project" value="InterPro"/>
</dbReference>
<dbReference type="GO" id="GO:0046983">
    <property type="term" value="F:protein dimerization activity"/>
    <property type="evidence" value="ECO:0007669"/>
    <property type="project" value="InterPro"/>
</dbReference>
<dbReference type="GO" id="GO:0036001">
    <property type="term" value="P:'de novo' pyridoxal 5'-phosphate biosynthetic process"/>
    <property type="evidence" value="ECO:0007669"/>
    <property type="project" value="TreeGrafter"/>
</dbReference>
<dbReference type="GO" id="GO:0008615">
    <property type="term" value="P:pyridoxine biosynthetic process"/>
    <property type="evidence" value="ECO:0007669"/>
    <property type="project" value="UniProtKB-UniRule"/>
</dbReference>
<dbReference type="CDD" id="cd12158">
    <property type="entry name" value="ErythrP_dh"/>
    <property type="match status" value="1"/>
</dbReference>
<dbReference type="FunFam" id="3.40.50.720:FF:000093">
    <property type="entry name" value="Erythronate-4-phosphate dehydrogenase"/>
    <property type="match status" value="1"/>
</dbReference>
<dbReference type="Gene3D" id="3.30.1370.170">
    <property type="match status" value="1"/>
</dbReference>
<dbReference type="Gene3D" id="3.40.50.720">
    <property type="entry name" value="NAD(P)-binding Rossmann-like Domain"/>
    <property type="match status" value="2"/>
</dbReference>
<dbReference type="HAMAP" id="MF_01825">
    <property type="entry name" value="PdxB"/>
    <property type="match status" value="1"/>
</dbReference>
<dbReference type="InterPro" id="IPR006139">
    <property type="entry name" value="D-isomer_2_OHA_DH_cat_dom"/>
</dbReference>
<dbReference type="InterPro" id="IPR029753">
    <property type="entry name" value="D-isomer_DH_CS"/>
</dbReference>
<dbReference type="InterPro" id="IPR029752">
    <property type="entry name" value="D-isomer_DH_CS1"/>
</dbReference>
<dbReference type="InterPro" id="IPR006140">
    <property type="entry name" value="D-isomer_DH_NAD-bd"/>
</dbReference>
<dbReference type="InterPro" id="IPR020921">
    <property type="entry name" value="Erythronate-4-P_DHase"/>
</dbReference>
<dbReference type="InterPro" id="IPR024531">
    <property type="entry name" value="Erythronate-4-P_DHase_dimer"/>
</dbReference>
<dbReference type="InterPro" id="IPR036291">
    <property type="entry name" value="NAD(P)-bd_dom_sf"/>
</dbReference>
<dbReference type="InterPro" id="IPR038251">
    <property type="entry name" value="PdxB_dimer_sf"/>
</dbReference>
<dbReference type="NCBIfam" id="NF001309">
    <property type="entry name" value="PRK00257.1"/>
    <property type="match status" value="1"/>
</dbReference>
<dbReference type="PANTHER" id="PTHR42938">
    <property type="entry name" value="FORMATE DEHYDROGENASE 1"/>
    <property type="match status" value="1"/>
</dbReference>
<dbReference type="PANTHER" id="PTHR42938:SF9">
    <property type="entry name" value="FORMATE DEHYDROGENASE 1"/>
    <property type="match status" value="1"/>
</dbReference>
<dbReference type="Pfam" id="PF00389">
    <property type="entry name" value="2-Hacid_dh"/>
    <property type="match status" value="1"/>
</dbReference>
<dbReference type="Pfam" id="PF02826">
    <property type="entry name" value="2-Hacid_dh_C"/>
    <property type="match status" value="1"/>
</dbReference>
<dbReference type="Pfam" id="PF11890">
    <property type="entry name" value="DUF3410"/>
    <property type="match status" value="1"/>
</dbReference>
<dbReference type="SUPFAM" id="SSF52283">
    <property type="entry name" value="Formate/glycerate dehydrogenase catalytic domain-like"/>
    <property type="match status" value="1"/>
</dbReference>
<dbReference type="SUPFAM" id="SSF51735">
    <property type="entry name" value="NAD(P)-binding Rossmann-fold domains"/>
    <property type="match status" value="1"/>
</dbReference>
<dbReference type="PROSITE" id="PS00065">
    <property type="entry name" value="D_2_HYDROXYACID_DH_1"/>
    <property type="match status" value="1"/>
</dbReference>
<dbReference type="PROSITE" id="PS00671">
    <property type="entry name" value="D_2_HYDROXYACID_DH_3"/>
    <property type="match status" value="1"/>
</dbReference>
<organism>
    <name type="scientific">Proteus mirabilis (strain HI4320)</name>
    <dbReference type="NCBI Taxonomy" id="529507"/>
    <lineage>
        <taxon>Bacteria</taxon>
        <taxon>Pseudomonadati</taxon>
        <taxon>Pseudomonadota</taxon>
        <taxon>Gammaproteobacteria</taxon>
        <taxon>Enterobacterales</taxon>
        <taxon>Morganellaceae</taxon>
        <taxon>Proteus</taxon>
    </lineage>
</organism>
<comment type="function">
    <text evidence="1">Catalyzes the oxidation of erythronate-4-phosphate to 3-hydroxy-2-oxo-4-phosphonooxybutanoate.</text>
</comment>
<comment type="catalytic activity">
    <reaction evidence="1">
        <text>4-phospho-D-erythronate + NAD(+) = (R)-3-hydroxy-2-oxo-4-phosphooxybutanoate + NADH + H(+)</text>
        <dbReference type="Rhea" id="RHEA:18829"/>
        <dbReference type="ChEBI" id="CHEBI:15378"/>
        <dbReference type="ChEBI" id="CHEBI:57540"/>
        <dbReference type="ChEBI" id="CHEBI:57945"/>
        <dbReference type="ChEBI" id="CHEBI:58538"/>
        <dbReference type="ChEBI" id="CHEBI:58766"/>
        <dbReference type="EC" id="1.1.1.290"/>
    </reaction>
</comment>
<comment type="pathway">
    <text evidence="1">Cofactor biosynthesis; pyridoxine 5'-phosphate biosynthesis; pyridoxine 5'-phosphate from D-erythrose 4-phosphate: step 2/5.</text>
</comment>
<comment type="subunit">
    <text evidence="1">Homodimer.</text>
</comment>
<comment type="subcellular location">
    <subcellularLocation>
        <location evidence="1">Cytoplasm</location>
    </subcellularLocation>
</comment>
<comment type="similarity">
    <text evidence="1">Belongs to the D-isomer specific 2-hydroxyacid dehydrogenase family. PdxB subfamily.</text>
</comment>
<accession>B4EZF9</accession>
<keyword id="KW-0963">Cytoplasm</keyword>
<keyword id="KW-0520">NAD</keyword>
<keyword id="KW-0560">Oxidoreductase</keyword>
<keyword id="KW-0664">Pyridoxine biosynthesis</keyword>
<keyword id="KW-1185">Reference proteome</keyword>
<sequence>MKILVDENMPYAQQLFCQLGEVKAVPGRPLPIEELDDTDALMVRSITKVNASLLAGKPVKFVGTATAGFDHVDTAWLEQQKIAFSSAPGCNAIAVVEYVFSALMVFAEQEGFQLTDKTVGIVGVGNVGGRLAKRLRALGVNVLLCDPPRADRGDDEQFHSLETLLKQADILTFHTPLNKSGRYNSYHLINESNLDILPEGRILINASRGEVIDNAALLSALNQGKKLRVVLDVWEPEPDLSLELLNKVDIATPHIAGYTLEGKARGTTQVYEAYCDFIGQPQHVELSTLLPKPLISTISVQGELTQTLLKQLIHLVYDVRRDDAPLRKVAGIKGEFDKLRKFYPVRREWSSLQVVCDNPTTASLLNAIGFNATHK</sequence>
<protein>
    <recommendedName>
        <fullName evidence="1">Erythronate-4-phosphate dehydrogenase</fullName>
        <ecNumber evidence="1">1.1.1.290</ecNumber>
    </recommendedName>
</protein>
<name>PDXB_PROMH</name>
<reference key="1">
    <citation type="journal article" date="2008" name="J. Bacteriol.">
        <title>Complete genome sequence of uropathogenic Proteus mirabilis, a master of both adherence and motility.</title>
        <authorList>
            <person name="Pearson M.M."/>
            <person name="Sebaihia M."/>
            <person name="Churcher C."/>
            <person name="Quail M.A."/>
            <person name="Seshasayee A.S."/>
            <person name="Luscombe N.M."/>
            <person name="Abdellah Z."/>
            <person name="Arrosmith C."/>
            <person name="Atkin B."/>
            <person name="Chillingworth T."/>
            <person name="Hauser H."/>
            <person name="Jagels K."/>
            <person name="Moule S."/>
            <person name="Mungall K."/>
            <person name="Norbertczak H."/>
            <person name="Rabbinowitsch E."/>
            <person name="Walker D."/>
            <person name="Whithead S."/>
            <person name="Thomson N.R."/>
            <person name="Rather P.N."/>
            <person name="Parkhill J."/>
            <person name="Mobley H.L.T."/>
        </authorList>
    </citation>
    <scope>NUCLEOTIDE SEQUENCE [LARGE SCALE GENOMIC DNA]</scope>
    <source>
        <strain>HI4320</strain>
    </source>
</reference>
<proteinExistence type="inferred from homology"/>